<keyword id="KW-0143">Chaperone</keyword>
<keyword id="KW-0963">Cytoplasm</keyword>
<keyword id="KW-0996">Nickel insertion</keyword>
<feature type="chain" id="PRO_0000346611" description="Urease accessory protein UreD 1">
    <location>
        <begin position="1"/>
        <end position="263"/>
    </location>
</feature>
<dbReference type="EMBL" id="CP000239">
    <property type="protein sequence ID" value="ABC98823.1"/>
    <property type="molecule type" value="Genomic_DNA"/>
</dbReference>
<dbReference type="SMR" id="Q2JWN6"/>
<dbReference type="STRING" id="321327.CYA_0607"/>
<dbReference type="KEGG" id="cya:CYA_0607"/>
<dbReference type="eggNOG" id="COG0829">
    <property type="taxonomic scope" value="Bacteria"/>
</dbReference>
<dbReference type="HOGENOM" id="CLU_1057403_0_0_3"/>
<dbReference type="Proteomes" id="UP000008818">
    <property type="component" value="Chromosome"/>
</dbReference>
<dbReference type="GO" id="GO:0005737">
    <property type="term" value="C:cytoplasm"/>
    <property type="evidence" value="ECO:0007669"/>
    <property type="project" value="UniProtKB-SubCell"/>
</dbReference>
<dbReference type="GO" id="GO:0016151">
    <property type="term" value="F:nickel cation binding"/>
    <property type="evidence" value="ECO:0007669"/>
    <property type="project" value="UniProtKB-UniRule"/>
</dbReference>
<dbReference type="HAMAP" id="MF_01384">
    <property type="entry name" value="UreD"/>
    <property type="match status" value="1"/>
</dbReference>
<dbReference type="InterPro" id="IPR002669">
    <property type="entry name" value="UreD"/>
</dbReference>
<dbReference type="PANTHER" id="PTHR33643">
    <property type="entry name" value="UREASE ACCESSORY PROTEIN D"/>
    <property type="match status" value="1"/>
</dbReference>
<dbReference type="PANTHER" id="PTHR33643:SF1">
    <property type="entry name" value="UREASE ACCESSORY PROTEIN D"/>
    <property type="match status" value="1"/>
</dbReference>
<dbReference type="Pfam" id="PF01774">
    <property type="entry name" value="UreD"/>
    <property type="match status" value="1"/>
</dbReference>
<gene>
    <name evidence="1" type="primary">ureD1</name>
    <name type="ordered locus">CYA_0607</name>
</gene>
<reference key="1">
    <citation type="journal article" date="2007" name="ISME J.">
        <title>Population level functional diversity in a microbial community revealed by comparative genomic and metagenomic analyses.</title>
        <authorList>
            <person name="Bhaya D."/>
            <person name="Grossman A.R."/>
            <person name="Steunou A.-S."/>
            <person name="Khuri N."/>
            <person name="Cohan F.M."/>
            <person name="Hamamura N."/>
            <person name="Melendrez M.C."/>
            <person name="Bateson M.M."/>
            <person name="Ward D.M."/>
            <person name="Heidelberg J.F."/>
        </authorList>
    </citation>
    <scope>NUCLEOTIDE SEQUENCE [LARGE SCALE GENOMIC DNA]</scope>
    <source>
        <strain>JA-3-3Ab</strain>
    </source>
</reference>
<name>URED1_SYNJA</name>
<comment type="function">
    <text evidence="1">Required for maturation of urease via the functional incorporation of the urease nickel metallocenter.</text>
</comment>
<comment type="subunit">
    <text evidence="1">UreD, UreF and UreG form a complex that acts as a GTP-hydrolysis-dependent molecular chaperone, activating the urease apoprotein by helping to assemble the nickel containing metallocenter of UreC. The UreE protein probably delivers the nickel.</text>
</comment>
<comment type="subcellular location">
    <subcellularLocation>
        <location evidence="1">Cytoplasm</location>
    </subcellularLocation>
</comment>
<comment type="similarity">
    <text evidence="1">Belongs to the UreD family.</text>
</comment>
<organism>
    <name type="scientific">Synechococcus sp. (strain JA-3-3Ab)</name>
    <name type="common">Cyanobacteria bacterium Yellowstone A-Prime</name>
    <dbReference type="NCBI Taxonomy" id="321327"/>
    <lineage>
        <taxon>Bacteria</taxon>
        <taxon>Bacillati</taxon>
        <taxon>Cyanobacteriota</taxon>
        <taxon>Cyanophyceae</taxon>
        <taxon>Synechococcales</taxon>
        <taxon>Synechococcaceae</taxon>
        <taxon>Synechococcus</taxon>
    </lineage>
</organism>
<accession>Q2JWN6</accession>
<proteinExistence type="inferred from homology"/>
<protein>
    <recommendedName>
        <fullName evidence="1">Urease accessory protein UreD 1</fullName>
    </recommendedName>
</protein>
<sequence>MVSQFLVSQLELEFIAIGGRTHLRRAYSRGALKVLRPFPYGEGLVLQLLTLGPGLMGGDQVEIRVHVAPGAKVILLNQSATKVLPARGYRPVVQRLLFRVEGFLEYYPGLTIPHPASALDQRMEVSLGTEASFSWMEMYALGRLARGEVGKFKWIRARTAIFGQVPFYMDALELLPEELGPNHPGVLEGHPYLVCGFWNWESHPFFEETENGLLGVGLTAFRHSFLRGIGNKEVTQRALKIWSQERALRGLPAVDVMRYSSAL</sequence>
<evidence type="ECO:0000255" key="1">
    <source>
        <dbReference type="HAMAP-Rule" id="MF_01384"/>
    </source>
</evidence>